<keyword id="KW-0997">Cell inner membrane</keyword>
<keyword id="KW-1003">Cell membrane</keyword>
<keyword id="KW-0472">Membrane</keyword>
<keyword id="KW-0812">Transmembrane</keyword>
<keyword id="KW-1133">Transmembrane helix</keyword>
<gene>
    <name type="ordered locus">YPTS_1639</name>
</gene>
<accession>B2JZJ8</accession>
<reference key="1">
    <citation type="submission" date="2008-04" db="EMBL/GenBank/DDBJ databases">
        <title>Complete sequence of Yersinia pseudotuberculosis PB1/+.</title>
        <authorList>
            <person name="Copeland A."/>
            <person name="Lucas S."/>
            <person name="Lapidus A."/>
            <person name="Glavina del Rio T."/>
            <person name="Dalin E."/>
            <person name="Tice H."/>
            <person name="Bruce D."/>
            <person name="Goodwin L."/>
            <person name="Pitluck S."/>
            <person name="Munk A.C."/>
            <person name="Brettin T."/>
            <person name="Detter J.C."/>
            <person name="Han C."/>
            <person name="Tapia R."/>
            <person name="Schmutz J."/>
            <person name="Larimer F."/>
            <person name="Land M."/>
            <person name="Hauser L."/>
            <person name="Challacombe J.F."/>
            <person name="Green L."/>
            <person name="Lindler L.E."/>
            <person name="Nikolich M.P."/>
            <person name="Richardson P."/>
        </authorList>
    </citation>
    <scope>NUCLEOTIDE SEQUENCE [LARGE SCALE GENOMIC DNA]</scope>
    <source>
        <strain>PB1/+</strain>
    </source>
</reference>
<proteinExistence type="inferred from homology"/>
<evidence type="ECO:0000255" key="1">
    <source>
        <dbReference type="HAMAP-Rule" id="MF_01144"/>
    </source>
</evidence>
<sequence>MRNMMSLCWQYLRAFTIIYLCLWAGKALALLLPIVIPGSIIGMLILFVLLTLQILPSPWVKPSCQLLIRYMALLFVPIGVGVMQYYEQLTKQFGPIVVSCFISTLIVMLVVAYSSHYVHRDRKVISPSTPTEGEK</sequence>
<name>Y1639_YERPB</name>
<feature type="chain" id="PRO_1000137376" description="UPF0299 membrane protein YPTS_1639">
    <location>
        <begin position="1"/>
        <end position="135"/>
    </location>
</feature>
<feature type="transmembrane region" description="Helical" evidence="1">
    <location>
        <begin position="30"/>
        <end position="50"/>
    </location>
</feature>
<feature type="transmembrane region" description="Helical" evidence="1">
    <location>
        <begin position="66"/>
        <end position="86"/>
    </location>
</feature>
<feature type="transmembrane region" description="Helical" evidence="1">
    <location>
        <begin position="93"/>
        <end position="113"/>
    </location>
</feature>
<protein>
    <recommendedName>
        <fullName evidence="1">UPF0299 membrane protein YPTS_1639</fullName>
    </recommendedName>
</protein>
<organism>
    <name type="scientific">Yersinia pseudotuberculosis serotype IB (strain PB1/+)</name>
    <dbReference type="NCBI Taxonomy" id="502801"/>
    <lineage>
        <taxon>Bacteria</taxon>
        <taxon>Pseudomonadati</taxon>
        <taxon>Pseudomonadota</taxon>
        <taxon>Gammaproteobacteria</taxon>
        <taxon>Enterobacterales</taxon>
        <taxon>Yersiniaceae</taxon>
        <taxon>Yersinia</taxon>
    </lineage>
</organism>
<comment type="subcellular location">
    <subcellularLocation>
        <location evidence="1">Cell inner membrane</location>
        <topology evidence="1">Multi-pass membrane protein</topology>
    </subcellularLocation>
</comment>
<comment type="similarity">
    <text evidence="1">Belongs to the UPF0299 family.</text>
</comment>
<dbReference type="EMBL" id="CP001048">
    <property type="protein sequence ID" value="ACC88608.1"/>
    <property type="molecule type" value="Genomic_DNA"/>
</dbReference>
<dbReference type="RefSeq" id="WP_002211971.1">
    <property type="nucleotide sequence ID" value="NZ_CP009780.1"/>
</dbReference>
<dbReference type="SMR" id="B2JZJ8"/>
<dbReference type="KEGG" id="ypb:YPTS_1639"/>
<dbReference type="PATRIC" id="fig|502801.10.peg.1009"/>
<dbReference type="GO" id="GO:0005886">
    <property type="term" value="C:plasma membrane"/>
    <property type="evidence" value="ECO:0007669"/>
    <property type="project" value="UniProtKB-SubCell"/>
</dbReference>
<dbReference type="HAMAP" id="MF_01144">
    <property type="entry name" value="UPF0299"/>
    <property type="match status" value="1"/>
</dbReference>
<dbReference type="InterPro" id="IPR005538">
    <property type="entry name" value="LrgA/CidA"/>
</dbReference>
<dbReference type="InterPro" id="IPR022957">
    <property type="entry name" value="Uncharacterised_UPF0299"/>
</dbReference>
<dbReference type="NCBIfam" id="NF002494">
    <property type="entry name" value="PRK01821.1"/>
    <property type="match status" value="1"/>
</dbReference>
<dbReference type="PANTHER" id="PTHR33931">
    <property type="entry name" value="HOLIN-LIKE PROTEIN CIDA-RELATED"/>
    <property type="match status" value="1"/>
</dbReference>
<dbReference type="PANTHER" id="PTHR33931:SF5">
    <property type="entry name" value="UPF0299 MEMBRANE PROTEIN YOHJ"/>
    <property type="match status" value="1"/>
</dbReference>
<dbReference type="Pfam" id="PF03788">
    <property type="entry name" value="LrgA"/>
    <property type="match status" value="1"/>
</dbReference>